<keyword id="KW-1003">Cell membrane</keyword>
<keyword id="KW-0444">Lipid biosynthesis</keyword>
<keyword id="KW-0443">Lipid metabolism</keyword>
<keyword id="KW-0460">Magnesium</keyword>
<keyword id="KW-0472">Membrane</keyword>
<keyword id="KW-0594">Phospholipid biosynthesis</keyword>
<keyword id="KW-1208">Phospholipid metabolism</keyword>
<keyword id="KW-0808">Transferase</keyword>
<keyword id="KW-0812">Transmembrane</keyword>
<keyword id="KW-1133">Transmembrane helix</keyword>
<sequence>MDLLLLLFSAIWYILPAYVANAVPCILGGGKPVDFGKTFFDGNRIIGNGVTYRGTFFGILFGIITGILQHFIVILYMGPETVFDYGLFGYIILSFLLASGTLFGDMLGSFIKRRFKLNQGQSAPILDQITFIVFALLFAYPFYPLATNSIVLLLVISPIIHFSSNIIAYKLHLKKVWW</sequence>
<feature type="chain" id="PRO_1000137225" description="CDP-archaeol synthase">
    <location>
        <begin position="1"/>
        <end position="178"/>
    </location>
</feature>
<feature type="transmembrane region" description="Helical" evidence="1">
    <location>
        <begin position="3"/>
        <end position="23"/>
    </location>
</feature>
<feature type="transmembrane region" description="Helical" evidence="1">
    <location>
        <begin position="56"/>
        <end position="76"/>
    </location>
</feature>
<feature type="transmembrane region" description="Helical" evidence="1">
    <location>
        <begin position="87"/>
        <end position="107"/>
    </location>
</feature>
<feature type="transmembrane region" description="Helical" evidence="1">
    <location>
        <begin position="123"/>
        <end position="145"/>
    </location>
</feature>
<feature type="transmembrane region" description="Helical" evidence="1">
    <location>
        <begin position="150"/>
        <end position="169"/>
    </location>
</feature>
<protein>
    <recommendedName>
        <fullName evidence="1">CDP-archaeol synthase</fullName>
        <ecNumber evidence="1">2.7.7.67</ecNumber>
    </recommendedName>
    <alternativeName>
        <fullName evidence="1">CDP-2,3-bis-(O-geranylgeranyl)-sn-glycerol synthase</fullName>
    </alternativeName>
</protein>
<name>CDPAS_METM6</name>
<organism>
    <name type="scientific">Methanococcus maripaludis (strain C6 / ATCC BAA-1332)</name>
    <dbReference type="NCBI Taxonomy" id="444158"/>
    <lineage>
        <taxon>Archaea</taxon>
        <taxon>Methanobacteriati</taxon>
        <taxon>Methanobacteriota</taxon>
        <taxon>Methanomada group</taxon>
        <taxon>Methanococci</taxon>
        <taxon>Methanococcales</taxon>
        <taxon>Methanococcaceae</taxon>
        <taxon>Methanococcus</taxon>
    </lineage>
</organism>
<reference key="1">
    <citation type="submission" date="2007-10" db="EMBL/GenBank/DDBJ databases">
        <title>Complete sequence of Methanococcus maripaludis C6.</title>
        <authorList>
            <consortium name="US DOE Joint Genome Institute"/>
            <person name="Copeland A."/>
            <person name="Lucas S."/>
            <person name="Lapidus A."/>
            <person name="Barry K."/>
            <person name="Glavina del Rio T."/>
            <person name="Dalin E."/>
            <person name="Tice H."/>
            <person name="Pitluck S."/>
            <person name="Clum A."/>
            <person name="Schmutz J."/>
            <person name="Larimer F."/>
            <person name="Land M."/>
            <person name="Hauser L."/>
            <person name="Kyrpides N."/>
            <person name="Mikhailova N."/>
            <person name="Sieprawska-Lupa M."/>
            <person name="Whitman W.B."/>
            <person name="Richardson P."/>
        </authorList>
    </citation>
    <scope>NUCLEOTIDE SEQUENCE [LARGE SCALE GENOMIC DNA]</scope>
    <source>
        <strain>C6 / ATCC BAA-1332</strain>
    </source>
</reference>
<comment type="function">
    <text evidence="1">Catalyzes the formation of CDP-2,3-bis-(O-geranylgeranyl)-sn-glycerol (CDP-archaeol) from 2,3-bis-(O-geranylgeranyl)-sn-glycerol 1-phosphate (DGGGP) and CTP. This reaction is the third ether-bond-formation step in the biosynthesis of archaeal membrane lipids.</text>
</comment>
<comment type="catalytic activity">
    <reaction evidence="1">
        <text>2,3-bis-O-(geranylgeranyl)-sn-glycerol 1-phosphate + CTP + H(+) = CDP-2,3-bis-O-(geranylgeranyl)-sn-glycerol + diphosphate</text>
        <dbReference type="Rhea" id="RHEA:25690"/>
        <dbReference type="ChEBI" id="CHEBI:15378"/>
        <dbReference type="ChEBI" id="CHEBI:33019"/>
        <dbReference type="ChEBI" id="CHEBI:37563"/>
        <dbReference type="ChEBI" id="CHEBI:58837"/>
        <dbReference type="ChEBI" id="CHEBI:58838"/>
        <dbReference type="EC" id="2.7.7.67"/>
    </reaction>
</comment>
<comment type="cofactor">
    <cofactor evidence="1">
        <name>Mg(2+)</name>
        <dbReference type="ChEBI" id="CHEBI:18420"/>
    </cofactor>
</comment>
<comment type="pathway">
    <text evidence="1">Membrane lipid metabolism; glycerophospholipid metabolism.</text>
</comment>
<comment type="subcellular location">
    <subcellularLocation>
        <location evidence="1">Cell membrane</location>
        <topology evidence="1">Multi-pass membrane protein</topology>
    </subcellularLocation>
</comment>
<comment type="similarity">
    <text evidence="1">Belongs to the CDP-archaeol synthase family.</text>
</comment>
<evidence type="ECO:0000255" key="1">
    <source>
        <dbReference type="HAMAP-Rule" id="MF_01117"/>
    </source>
</evidence>
<accession>A9A8W5</accession>
<gene>
    <name evidence="1" type="primary">carS</name>
    <name type="ordered locus">MmarC6_0973</name>
</gene>
<proteinExistence type="inferred from homology"/>
<dbReference type="EC" id="2.7.7.67" evidence="1"/>
<dbReference type="EMBL" id="CP000867">
    <property type="protein sequence ID" value="ABX01788.1"/>
    <property type="molecule type" value="Genomic_DNA"/>
</dbReference>
<dbReference type="SMR" id="A9A8W5"/>
<dbReference type="STRING" id="444158.MmarC6_0973"/>
<dbReference type="KEGG" id="mmx:MmarC6_0973"/>
<dbReference type="eggNOG" id="arCOG04106">
    <property type="taxonomic scope" value="Archaea"/>
</dbReference>
<dbReference type="HOGENOM" id="CLU_105710_0_0_2"/>
<dbReference type="OrthoDB" id="45383at2157"/>
<dbReference type="PhylomeDB" id="A9A8W5"/>
<dbReference type="UniPathway" id="UPA00940"/>
<dbReference type="GO" id="GO:0005886">
    <property type="term" value="C:plasma membrane"/>
    <property type="evidence" value="ECO:0007669"/>
    <property type="project" value="UniProtKB-SubCell"/>
</dbReference>
<dbReference type="GO" id="GO:0043338">
    <property type="term" value="F:CDP-2,3-bis-(O-geranylgeranyl)-sn-glycerol synthase activity"/>
    <property type="evidence" value="ECO:0007669"/>
    <property type="project" value="UniProtKB-EC"/>
</dbReference>
<dbReference type="GO" id="GO:0046474">
    <property type="term" value="P:glycerophospholipid biosynthetic process"/>
    <property type="evidence" value="ECO:0007669"/>
    <property type="project" value="UniProtKB-UniRule"/>
</dbReference>
<dbReference type="HAMAP" id="MF_01117">
    <property type="entry name" value="CDP_archaeol_synth"/>
    <property type="match status" value="1"/>
</dbReference>
<dbReference type="InterPro" id="IPR032690">
    <property type="entry name" value="CarS"/>
</dbReference>
<dbReference type="InterPro" id="IPR002726">
    <property type="entry name" value="CarS_archaea"/>
</dbReference>
<dbReference type="NCBIfam" id="NF003114">
    <property type="entry name" value="PRK04032.1"/>
    <property type="match status" value="1"/>
</dbReference>
<dbReference type="PANTHER" id="PTHR39650">
    <property type="entry name" value="CDP-ARCHAEOL SYNTHASE"/>
    <property type="match status" value="1"/>
</dbReference>
<dbReference type="PANTHER" id="PTHR39650:SF1">
    <property type="entry name" value="CDP-ARCHAEOL SYNTHASE"/>
    <property type="match status" value="1"/>
</dbReference>
<dbReference type="Pfam" id="PF01864">
    <property type="entry name" value="CarS-like"/>
    <property type="match status" value="1"/>
</dbReference>